<protein>
    <recommendedName>
        <fullName evidence="1">Polyribonucleotide nucleotidyltransferase</fullName>
        <ecNumber evidence="1">2.7.7.8</ecNumber>
    </recommendedName>
    <alternativeName>
        <fullName evidence="1">Polynucleotide phosphorylase</fullName>
        <shortName evidence="1">PNPase</shortName>
    </alternativeName>
</protein>
<sequence length="696" mass="76331">MNKIRKTFQYGKHEVTFETGEMARQATGAVVVRMGDTVLLVSVVAKKEAEEGRDFFPLTVNYQEKTYAAGKIPGGYFKREGRPTEKETLTSRLIDRPLRPLFPKGFTNEVQVIATVLSVDSKVPTDIPAILGASAAIGLSGIPFNGSLGAARVGYRGGEYLLNPSLDELKDSALDLVVAGTRDAVLMVESEAQELPESVMLGAVLHGHQAMQVAIQAIAEFIQEAGGAKWEWEPPTVNTALEKWVVEKSEAPLKKAYQIQEKTARQAQIQAIRDQLLADRAAEREGEENAVNEHELAVIFHELERRIVREQILTGQPRIDGRDTKTVRPITVKVGVLPRSHGSALFTRGETQALVVTTLGTERDAQSIDDLDGDRQEEFIFHYNFPPFCVGEVGFMSGPKRREIGHGRLAKRAVVPVVPTLDKFPYVIRVVSEILESNGSSSMASVCGSSLALMDAGVPTKAPVAGIAMGLIKENDKYAVLSDILGDEDHLGDMDFKVAGTSNGVTALQMDIKIEGITKEIMEQALDQAKEGRLHILSIMNKVLDKPRSQVSDLAPQYVTMKINPEKIRDVIGKGGVVIREITEATNCAIDISDDGTIKIAAHTTEEGEAAKRRIEELTAEVELGKVYEGTVVKITDFGAFVQILPNTQGLVHISQIAQERVENVRDYLEEGQVIRVKVIEIDRQGRVRLSMKQID</sequence>
<keyword id="KW-0963">Cytoplasm</keyword>
<keyword id="KW-0460">Magnesium</keyword>
<keyword id="KW-0479">Metal-binding</keyword>
<keyword id="KW-0548">Nucleotidyltransferase</keyword>
<keyword id="KW-0694">RNA-binding</keyword>
<keyword id="KW-0808">Transferase</keyword>
<gene>
    <name evidence="1" type="primary">pnp</name>
    <name type="ordered locus">COXBURSA331_A1098</name>
</gene>
<comment type="function">
    <text evidence="1">Involved in mRNA degradation. Catalyzes the phosphorolysis of single-stranded polyribonucleotides processively in the 3'- to 5'-direction.</text>
</comment>
<comment type="catalytic activity">
    <reaction evidence="1">
        <text>RNA(n+1) + phosphate = RNA(n) + a ribonucleoside 5'-diphosphate</text>
        <dbReference type="Rhea" id="RHEA:22096"/>
        <dbReference type="Rhea" id="RHEA-COMP:14527"/>
        <dbReference type="Rhea" id="RHEA-COMP:17342"/>
        <dbReference type="ChEBI" id="CHEBI:43474"/>
        <dbReference type="ChEBI" id="CHEBI:57930"/>
        <dbReference type="ChEBI" id="CHEBI:140395"/>
        <dbReference type="EC" id="2.7.7.8"/>
    </reaction>
</comment>
<comment type="cofactor">
    <cofactor evidence="1">
        <name>Mg(2+)</name>
        <dbReference type="ChEBI" id="CHEBI:18420"/>
    </cofactor>
</comment>
<comment type="subunit">
    <text evidence="1">Component of the RNA degradosome, which is a multiprotein complex involved in RNA processing and mRNA degradation.</text>
</comment>
<comment type="subcellular location">
    <subcellularLocation>
        <location evidence="1">Cytoplasm</location>
    </subcellularLocation>
</comment>
<comment type="similarity">
    <text evidence="1">Belongs to the polyribonucleotide nucleotidyltransferase family.</text>
</comment>
<feature type="chain" id="PRO_0000329614" description="Polyribonucleotide nucleotidyltransferase">
    <location>
        <begin position="1"/>
        <end position="696"/>
    </location>
</feature>
<feature type="domain" description="KH" evidence="1">
    <location>
        <begin position="556"/>
        <end position="615"/>
    </location>
</feature>
<feature type="domain" description="S1 motif" evidence="1">
    <location>
        <begin position="625"/>
        <end position="693"/>
    </location>
</feature>
<feature type="binding site" evidence="1">
    <location>
        <position position="489"/>
    </location>
    <ligand>
        <name>Mg(2+)</name>
        <dbReference type="ChEBI" id="CHEBI:18420"/>
    </ligand>
</feature>
<feature type="binding site" evidence="1">
    <location>
        <position position="495"/>
    </location>
    <ligand>
        <name>Mg(2+)</name>
        <dbReference type="ChEBI" id="CHEBI:18420"/>
    </ligand>
</feature>
<name>PNP_COXBR</name>
<evidence type="ECO:0000255" key="1">
    <source>
        <dbReference type="HAMAP-Rule" id="MF_01595"/>
    </source>
</evidence>
<dbReference type="EC" id="2.7.7.8" evidence="1"/>
<dbReference type="EMBL" id="CP000890">
    <property type="protein sequence ID" value="ABX77312.1"/>
    <property type="molecule type" value="Genomic_DNA"/>
</dbReference>
<dbReference type="RefSeq" id="WP_010957848.1">
    <property type="nucleotide sequence ID" value="NC_010117.1"/>
</dbReference>
<dbReference type="SMR" id="A9ND62"/>
<dbReference type="KEGG" id="cbs:COXBURSA331_A1098"/>
<dbReference type="HOGENOM" id="CLU_004217_2_2_6"/>
<dbReference type="GO" id="GO:0005829">
    <property type="term" value="C:cytosol"/>
    <property type="evidence" value="ECO:0007669"/>
    <property type="project" value="TreeGrafter"/>
</dbReference>
<dbReference type="GO" id="GO:0000175">
    <property type="term" value="F:3'-5'-RNA exonuclease activity"/>
    <property type="evidence" value="ECO:0007669"/>
    <property type="project" value="TreeGrafter"/>
</dbReference>
<dbReference type="GO" id="GO:0000287">
    <property type="term" value="F:magnesium ion binding"/>
    <property type="evidence" value="ECO:0007669"/>
    <property type="project" value="UniProtKB-UniRule"/>
</dbReference>
<dbReference type="GO" id="GO:0004654">
    <property type="term" value="F:polyribonucleotide nucleotidyltransferase activity"/>
    <property type="evidence" value="ECO:0007669"/>
    <property type="project" value="UniProtKB-UniRule"/>
</dbReference>
<dbReference type="GO" id="GO:0003723">
    <property type="term" value="F:RNA binding"/>
    <property type="evidence" value="ECO:0007669"/>
    <property type="project" value="UniProtKB-UniRule"/>
</dbReference>
<dbReference type="GO" id="GO:0006402">
    <property type="term" value="P:mRNA catabolic process"/>
    <property type="evidence" value="ECO:0007669"/>
    <property type="project" value="UniProtKB-UniRule"/>
</dbReference>
<dbReference type="GO" id="GO:0006396">
    <property type="term" value="P:RNA processing"/>
    <property type="evidence" value="ECO:0007669"/>
    <property type="project" value="InterPro"/>
</dbReference>
<dbReference type="CDD" id="cd02393">
    <property type="entry name" value="KH-I_PNPase"/>
    <property type="match status" value="1"/>
</dbReference>
<dbReference type="CDD" id="cd11363">
    <property type="entry name" value="RNase_PH_PNPase_1"/>
    <property type="match status" value="1"/>
</dbReference>
<dbReference type="CDD" id="cd11364">
    <property type="entry name" value="RNase_PH_PNPase_2"/>
    <property type="match status" value="1"/>
</dbReference>
<dbReference type="CDD" id="cd04472">
    <property type="entry name" value="S1_PNPase"/>
    <property type="match status" value="1"/>
</dbReference>
<dbReference type="FunFam" id="2.40.50.140:FF:000023">
    <property type="entry name" value="Polyribonucleotide nucleotidyltransferase"/>
    <property type="match status" value="1"/>
</dbReference>
<dbReference type="FunFam" id="3.30.1370.10:FF:000001">
    <property type="entry name" value="Polyribonucleotide nucleotidyltransferase"/>
    <property type="match status" value="1"/>
</dbReference>
<dbReference type="FunFam" id="3.30.230.70:FF:000001">
    <property type="entry name" value="Polyribonucleotide nucleotidyltransferase"/>
    <property type="match status" value="1"/>
</dbReference>
<dbReference type="FunFam" id="3.30.230.70:FF:000002">
    <property type="entry name" value="Polyribonucleotide nucleotidyltransferase"/>
    <property type="match status" value="1"/>
</dbReference>
<dbReference type="Gene3D" id="3.30.230.70">
    <property type="entry name" value="GHMP Kinase, N-terminal domain"/>
    <property type="match status" value="2"/>
</dbReference>
<dbReference type="Gene3D" id="3.30.1370.10">
    <property type="entry name" value="K Homology domain, type 1"/>
    <property type="match status" value="1"/>
</dbReference>
<dbReference type="Gene3D" id="2.40.50.140">
    <property type="entry name" value="Nucleic acid-binding proteins"/>
    <property type="match status" value="1"/>
</dbReference>
<dbReference type="HAMAP" id="MF_01595">
    <property type="entry name" value="PNPase"/>
    <property type="match status" value="1"/>
</dbReference>
<dbReference type="InterPro" id="IPR001247">
    <property type="entry name" value="ExoRNase_PH_dom1"/>
</dbReference>
<dbReference type="InterPro" id="IPR015847">
    <property type="entry name" value="ExoRNase_PH_dom2"/>
</dbReference>
<dbReference type="InterPro" id="IPR036345">
    <property type="entry name" value="ExoRNase_PH_dom2_sf"/>
</dbReference>
<dbReference type="InterPro" id="IPR004087">
    <property type="entry name" value="KH_dom"/>
</dbReference>
<dbReference type="InterPro" id="IPR004088">
    <property type="entry name" value="KH_dom_type_1"/>
</dbReference>
<dbReference type="InterPro" id="IPR036612">
    <property type="entry name" value="KH_dom_type_1_sf"/>
</dbReference>
<dbReference type="InterPro" id="IPR012340">
    <property type="entry name" value="NA-bd_OB-fold"/>
</dbReference>
<dbReference type="InterPro" id="IPR012162">
    <property type="entry name" value="PNPase"/>
</dbReference>
<dbReference type="InterPro" id="IPR027408">
    <property type="entry name" value="PNPase/RNase_PH_dom_sf"/>
</dbReference>
<dbReference type="InterPro" id="IPR015848">
    <property type="entry name" value="PNPase_PH_RNA-bd_bac/org-type"/>
</dbReference>
<dbReference type="InterPro" id="IPR036456">
    <property type="entry name" value="PNPase_PH_RNA-bd_sf"/>
</dbReference>
<dbReference type="InterPro" id="IPR020568">
    <property type="entry name" value="Ribosomal_Su5_D2-typ_SF"/>
</dbReference>
<dbReference type="InterPro" id="IPR003029">
    <property type="entry name" value="S1_domain"/>
</dbReference>
<dbReference type="NCBIfam" id="TIGR03591">
    <property type="entry name" value="polynuc_phos"/>
    <property type="match status" value="1"/>
</dbReference>
<dbReference type="NCBIfam" id="NF008805">
    <property type="entry name" value="PRK11824.1"/>
    <property type="match status" value="1"/>
</dbReference>
<dbReference type="PANTHER" id="PTHR11252">
    <property type="entry name" value="POLYRIBONUCLEOTIDE NUCLEOTIDYLTRANSFERASE"/>
    <property type="match status" value="1"/>
</dbReference>
<dbReference type="PANTHER" id="PTHR11252:SF0">
    <property type="entry name" value="POLYRIBONUCLEOTIDE NUCLEOTIDYLTRANSFERASE 1, MITOCHONDRIAL"/>
    <property type="match status" value="1"/>
</dbReference>
<dbReference type="Pfam" id="PF00013">
    <property type="entry name" value="KH_1"/>
    <property type="match status" value="1"/>
</dbReference>
<dbReference type="Pfam" id="PF03726">
    <property type="entry name" value="PNPase"/>
    <property type="match status" value="1"/>
</dbReference>
<dbReference type="Pfam" id="PF01138">
    <property type="entry name" value="RNase_PH"/>
    <property type="match status" value="2"/>
</dbReference>
<dbReference type="Pfam" id="PF03725">
    <property type="entry name" value="RNase_PH_C"/>
    <property type="match status" value="2"/>
</dbReference>
<dbReference type="Pfam" id="PF00575">
    <property type="entry name" value="S1"/>
    <property type="match status" value="1"/>
</dbReference>
<dbReference type="PIRSF" id="PIRSF005499">
    <property type="entry name" value="PNPase"/>
    <property type="match status" value="1"/>
</dbReference>
<dbReference type="SMART" id="SM00322">
    <property type="entry name" value="KH"/>
    <property type="match status" value="1"/>
</dbReference>
<dbReference type="SMART" id="SM00316">
    <property type="entry name" value="S1"/>
    <property type="match status" value="1"/>
</dbReference>
<dbReference type="SUPFAM" id="SSF54791">
    <property type="entry name" value="Eukaryotic type KH-domain (KH-domain type I)"/>
    <property type="match status" value="1"/>
</dbReference>
<dbReference type="SUPFAM" id="SSF50249">
    <property type="entry name" value="Nucleic acid-binding proteins"/>
    <property type="match status" value="1"/>
</dbReference>
<dbReference type="SUPFAM" id="SSF46915">
    <property type="entry name" value="Polynucleotide phosphorylase/guanosine pentaphosphate synthase (PNPase/GPSI), domain 3"/>
    <property type="match status" value="1"/>
</dbReference>
<dbReference type="SUPFAM" id="SSF55666">
    <property type="entry name" value="Ribonuclease PH domain 2-like"/>
    <property type="match status" value="2"/>
</dbReference>
<dbReference type="SUPFAM" id="SSF54211">
    <property type="entry name" value="Ribosomal protein S5 domain 2-like"/>
    <property type="match status" value="2"/>
</dbReference>
<dbReference type="PROSITE" id="PS50084">
    <property type="entry name" value="KH_TYPE_1"/>
    <property type="match status" value="1"/>
</dbReference>
<dbReference type="PROSITE" id="PS50126">
    <property type="entry name" value="S1"/>
    <property type="match status" value="1"/>
</dbReference>
<reference key="1">
    <citation type="submission" date="2007-11" db="EMBL/GenBank/DDBJ databases">
        <title>Genome sequencing of phylogenetically and phenotypically diverse Coxiella burnetii isolates.</title>
        <authorList>
            <person name="Seshadri R."/>
            <person name="Samuel J.E."/>
        </authorList>
    </citation>
    <scope>NUCLEOTIDE SEQUENCE [LARGE SCALE GENOMIC DNA]</scope>
    <source>
        <strain>RSA 331 / Henzerling II</strain>
    </source>
</reference>
<organism>
    <name type="scientific">Coxiella burnetii (strain RSA 331 / Henzerling II)</name>
    <dbReference type="NCBI Taxonomy" id="360115"/>
    <lineage>
        <taxon>Bacteria</taxon>
        <taxon>Pseudomonadati</taxon>
        <taxon>Pseudomonadota</taxon>
        <taxon>Gammaproteobacteria</taxon>
        <taxon>Legionellales</taxon>
        <taxon>Coxiellaceae</taxon>
        <taxon>Coxiella</taxon>
    </lineage>
</organism>
<proteinExistence type="inferred from homology"/>
<accession>A9ND62</accession>